<proteinExistence type="evidence at transcript level"/>
<feature type="signal peptide" evidence="2">
    <location>
        <begin position="1"/>
        <end position="16"/>
    </location>
</feature>
<feature type="propeptide" id="PRO_0000435154" evidence="4">
    <location>
        <begin position="17"/>
        <end position="76"/>
    </location>
</feature>
<feature type="chain" id="PRO_0000429238" description="U16-barytoxin-Tl1c">
    <location>
        <begin position="77"/>
        <end position="118"/>
    </location>
</feature>
<feature type="disulfide bond" evidence="1">
    <location>
        <begin position="77"/>
        <end position="92"/>
    </location>
</feature>
<feature type="disulfide bond" evidence="1">
    <location>
        <begin position="84"/>
        <end position="97"/>
    </location>
</feature>
<feature type="disulfide bond" evidence="1">
    <location>
        <begin position="91"/>
        <end position="112"/>
    </location>
</feature>
<accession>W4VRU6</accession>
<organism>
    <name type="scientific">Trittame loki</name>
    <name type="common">Brush-footed trapdoor spider</name>
    <dbReference type="NCBI Taxonomy" id="1295018"/>
    <lineage>
        <taxon>Eukaryota</taxon>
        <taxon>Metazoa</taxon>
        <taxon>Ecdysozoa</taxon>
        <taxon>Arthropoda</taxon>
        <taxon>Chelicerata</taxon>
        <taxon>Arachnida</taxon>
        <taxon>Araneae</taxon>
        <taxon>Mygalomorphae</taxon>
        <taxon>Barychelidae</taxon>
        <taxon>Trittame</taxon>
    </lineage>
</organism>
<sequence length="118" mass="13130">MKTIIVFLSFLVLVLATKFGDANEGVNREQTKEVIQNEFRGDFLNEMAAMSLLQQLEAIESALLEKEADRNSRQKRCNGKNVPCGSNHSPCCSGLSCEETFGYGWLYKSPYCVIPSNG</sequence>
<protein>
    <recommendedName>
        <fullName>U16-barytoxin-Tl1c</fullName>
        <shortName>U16-BATX-Tl1c</shortName>
    </recommendedName>
    <alternativeName>
        <fullName evidence="3">Toxin ICK-31</fullName>
    </alternativeName>
</protein>
<reference key="1">
    <citation type="journal article" date="2013" name="Toxins">
        <title>A proteomics and transcriptomics investigation of the venom from the barychelid spider Trittame loki (brush-foot trapdoor).</title>
        <authorList>
            <person name="Undheim E.A."/>
            <person name="Sunagar K."/>
            <person name="Herzig V."/>
            <person name="Kely L."/>
            <person name="Low D.H."/>
            <person name="Jackson T.N."/>
            <person name="Jones A."/>
            <person name="Kurniawan N."/>
            <person name="King G.F."/>
            <person name="Ali S.A."/>
            <person name="Antunes A."/>
            <person name="Ruder T."/>
            <person name="Fry B.G."/>
        </authorList>
    </citation>
    <scope>NUCLEOTIDE SEQUENCE [MRNA]</scope>
    <source>
        <tissue>Venom gland</tissue>
    </source>
</reference>
<keyword id="KW-1015">Disulfide bond</keyword>
<keyword id="KW-0872">Ion channel impairing toxin</keyword>
<keyword id="KW-0960">Knottin</keyword>
<keyword id="KW-0964">Secreted</keyword>
<keyword id="KW-0732">Signal</keyword>
<keyword id="KW-0800">Toxin</keyword>
<dbReference type="EMBL" id="GAQE01000034">
    <property type="protein sequence ID" value="JAB84520.1"/>
    <property type="molecule type" value="Transcribed_RNA"/>
</dbReference>
<dbReference type="ArachnoServer" id="AS001717">
    <property type="toxin name" value="U16-barytoxin-Tl1c"/>
</dbReference>
<dbReference type="GO" id="GO:0005576">
    <property type="term" value="C:extracellular region"/>
    <property type="evidence" value="ECO:0007669"/>
    <property type="project" value="UniProtKB-SubCell"/>
</dbReference>
<dbReference type="GO" id="GO:0019871">
    <property type="term" value="F:sodium channel inhibitor activity"/>
    <property type="evidence" value="ECO:0007669"/>
    <property type="project" value="InterPro"/>
</dbReference>
<dbReference type="GO" id="GO:0090729">
    <property type="term" value="F:toxin activity"/>
    <property type="evidence" value="ECO:0007669"/>
    <property type="project" value="UniProtKB-KW"/>
</dbReference>
<dbReference type="InterPro" id="IPR012627">
    <property type="entry name" value="Toxin_22"/>
</dbReference>
<dbReference type="Pfam" id="PF08092">
    <property type="entry name" value="Toxin_22"/>
    <property type="match status" value="1"/>
</dbReference>
<evidence type="ECO:0000250" key="1"/>
<evidence type="ECO:0000255" key="2"/>
<evidence type="ECO:0000303" key="3">
    <source>
    </source>
</evidence>
<evidence type="ECO:0000305" key="4"/>
<comment type="function">
    <text evidence="4">Ion channel inhibitor.</text>
</comment>
<comment type="subcellular location">
    <subcellularLocation>
        <location evidence="1">Secreted</location>
    </subcellularLocation>
</comment>
<comment type="tissue specificity">
    <text>Expressed by the venom gland.</text>
</comment>
<comment type="domain">
    <text evidence="1">The presence of a 'disulfide through disulfide knot' structurally defines this protein as a knottin.</text>
</comment>
<comment type="similarity">
    <text evidence="4">Belongs to the neurotoxin 14 (magi-1) family. 06 (ICK-Trit) subfamily.</text>
</comment>
<name>ICK31_TRILK</name>